<name>PYRR_STAAE</name>
<proteinExistence type="inferred from homology"/>
<keyword id="KW-0328">Glycosyltransferase</keyword>
<keyword id="KW-0694">RNA-binding</keyword>
<keyword id="KW-0804">Transcription</keyword>
<keyword id="KW-0805">Transcription regulation</keyword>
<keyword id="KW-0806">Transcription termination</keyword>
<keyword id="KW-0808">Transferase</keyword>
<protein>
    <recommendedName>
        <fullName evidence="1">Bifunctional protein PyrR</fullName>
    </recommendedName>
    <domain>
        <recommendedName>
            <fullName evidence="1">Pyrimidine operon regulatory protein</fullName>
        </recommendedName>
    </domain>
    <domain>
        <recommendedName>
            <fullName evidence="1">Uracil phosphoribosyltransferase</fullName>
            <shortName evidence="1">UPRTase</shortName>
            <ecNumber evidence="1">2.4.2.9</ecNumber>
        </recommendedName>
    </domain>
</protein>
<accession>A6QG99</accession>
<organism>
    <name type="scientific">Staphylococcus aureus (strain Newman)</name>
    <dbReference type="NCBI Taxonomy" id="426430"/>
    <lineage>
        <taxon>Bacteria</taxon>
        <taxon>Bacillati</taxon>
        <taxon>Bacillota</taxon>
        <taxon>Bacilli</taxon>
        <taxon>Bacillales</taxon>
        <taxon>Staphylococcaceae</taxon>
        <taxon>Staphylococcus</taxon>
    </lineage>
</organism>
<evidence type="ECO:0000255" key="1">
    <source>
        <dbReference type="HAMAP-Rule" id="MF_01219"/>
    </source>
</evidence>
<reference key="1">
    <citation type="journal article" date="2008" name="J. Bacteriol.">
        <title>Genome sequence of Staphylococcus aureus strain Newman and comparative analysis of staphylococcal genomes: polymorphism and evolution of two major pathogenicity islands.</title>
        <authorList>
            <person name="Baba T."/>
            <person name="Bae T."/>
            <person name="Schneewind O."/>
            <person name="Takeuchi F."/>
            <person name="Hiramatsu K."/>
        </authorList>
    </citation>
    <scope>NUCLEOTIDE SEQUENCE [LARGE SCALE GENOMIC DNA]</scope>
    <source>
        <strain>Newman</strain>
    </source>
</reference>
<gene>
    <name evidence="1" type="primary">pyrR</name>
    <name type="ordered locus">NWMN_1109</name>
</gene>
<comment type="function">
    <text evidence="1">Regulates transcriptional attenuation of the pyrimidine nucleotide (pyr) operon by binding in a uridine-dependent manner to specific sites on pyr mRNA. This disrupts an antiterminator hairpin in the RNA and favors formation of a downstream transcription terminator, leading to a reduced expression of downstream genes.</text>
</comment>
<comment type="function">
    <text evidence="1">Also displays a weak uracil phosphoribosyltransferase activity which is not physiologically significant.</text>
</comment>
<comment type="catalytic activity">
    <reaction evidence="1">
        <text>UMP + diphosphate = 5-phospho-alpha-D-ribose 1-diphosphate + uracil</text>
        <dbReference type="Rhea" id="RHEA:13017"/>
        <dbReference type="ChEBI" id="CHEBI:17568"/>
        <dbReference type="ChEBI" id="CHEBI:33019"/>
        <dbReference type="ChEBI" id="CHEBI:57865"/>
        <dbReference type="ChEBI" id="CHEBI:58017"/>
        <dbReference type="EC" id="2.4.2.9"/>
    </reaction>
</comment>
<comment type="subunit">
    <text evidence="1">Homodimer and homohexamer; in equilibrium.</text>
</comment>
<comment type="similarity">
    <text evidence="1">Belongs to the purine/pyrimidine phosphoribosyltransferase family. PyrR subfamily.</text>
</comment>
<feature type="chain" id="PRO_1000073135" description="Bifunctional protein PyrR">
    <location>
        <begin position="1"/>
        <end position="175"/>
    </location>
</feature>
<feature type="short sequence motif" description="PRPP-binding" evidence="1">
    <location>
        <begin position="98"/>
        <end position="110"/>
    </location>
</feature>
<dbReference type="EC" id="2.4.2.9" evidence="1"/>
<dbReference type="EMBL" id="AP009351">
    <property type="protein sequence ID" value="BAF67381.1"/>
    <property type="molecule type" value="Genomic_DNA"/>
</dbReference>
<dbReference type="RefSeq" id="WP_000003870.1">
    <property type="nucleotide sequence ID" value="NZ_JBBIAE010000001.1"/>
</dbReference>
<dbReference type="SMR" id="A6QG99"/>
<dbReference type="KEGG" id="sae:NWMN_1109"/>
<dbReference type="HOGENOM" id="CLU_094234_2_1_9"/>
<dbReference type="Proteomes" id="UP000006386">
    <property type="component" value="Chromosome"/>
</dbReference>
<dbReference type="GO" id="GO:0003723">
    <property type="term" value="F:RNA binding"/>
    <property type="evidence" value="ECO:0007669"/>
    <property type="project" value="UniProtKB-UniRule"/>
</dbReference>
<dbReference type="GO" id="GO:0004845">
    <property type="term" value="F:uracil phosphoribosyltransferase activity"/>
    <property type="evidence" value="ECO:0007669"/>
    <property type="project" value="UniProtKB-UniRule"/>
</dbReference>
<dbReference type="GO" id="GO:0006353">
    <property type="term" value="P:DNA-templated transcription termination"/>
    <property type="evidence" value="ECO:0007669"/>
    <property type="project" value="UniProtKB-UniRule"/>
</dbReference>
<dbReference type="CDD" id="cd06223">
    <property type="entry name" value="PRTases_typeI"/>
    <property type="match status" value="1"/>
</dbReference>
<dbReference type="FunFam" id="3.40.50.2020:FF:000020">
    <property type="entry name" value="Bifunctional protein PyrR"/>
    <property type="match status" value="1"/>
</dbReference>
<dbReference type="Gene3D" id="3.40.50.2020">
    <property type="match status" value="1"/>
</dbReference>
<dbReference type="HAMAP" id="MF_01219">
    <property type="entry name" value="PyrR"/>
    <property type="match status" value="1"/>
</dbReference>
<dbReference type="InterPro" id="IPR000836">
    <property type="entry name" value="PRibTrfase_dom"/>
</dbReference>
<dbReference type="InterPro" id="IPR029057">
    <property type="entry name" value="PRTase-like"/>
</dbReference>
<dbReference type="InterPro" id="IPR023050">
    <property type="entry name" value="PyrR"/>
</dbReference>
<dbReference type="InterPro" id="IPR050137">
    <property type="entry name" value="PyrR_bifunctional"/>
</dbReference>
<dbReference type="NCBIfam" id="NF003546">
    <property type="entry name" value="PRK05205.1-2"/>
    <property type="match status" value="1"/>
</dbReference>
<dbReference type="NCBIfam" id="NF003548">
    <property type="entry name" value="PRK05205.1-4"/>
    <property type="match status" value="1"/>
</dbReference>
<dbReference type="NCBIfam" id="NF003549">
    <property type="entry name" value="PRK05205.1-5"/>
    <property type="match status" value="1"/>
</dbReference>
<dbReference type="PANTHER" id="PTHR11608">
    <property type="entry name" value="BIFUNCTIONAL PROTEIN PYRR"/>
    <property type="match status" value="1"/>
</dbReference>
<dbReference type="PANTHER" id="PTHR11608:SF0">
    <property type="entry name" value="BIFUNCTIONAL PROTEIN PYRR"/>
    <property type="match status" value="1"/>
</dbReference>
<dbReference type="Pfam" id="PF00156">
    <property type="entry name" value="Pribosyltran"/>
    <property type="match status" value="1"/>
</dbReference>
<dbReference type="SUPFAM" id="SSF53271">
    <property type="entry name" value="PRTase-like"/>
    <property type="match status" value="1"/>
</dbReference>
<sequence length="175" mass="19855">MSERIIMDDAAIQRTVTRIAHEILEYNKGTDNLILLGIKTRGEYLANRIQDKIHQIEQQRIPTGTIDITYFRDDIEHMSSLTTKDAIDIDTDITDKVVIIIDDVLYTGRTVRASLDAILLNARPIKIGLAALVDRGHRELPIRADFVGKNIPTSKEETVSVYLEEMDQRNAVIIK</sequence>